<accession>A7MMV3</accession>
<gene>
    <name evidence="1" type="primary">kup</name>
    <name type="ordered locus">ESA_04021</name>
</gene>
<proteinExistence type="inferred from homology"/>
<protein>
    <recommendedName>
        <fullName evidence="1">Low affinity potassium transport system protein Kup</fullName>
    </recommendedName>
    <alternativeName>
        <fullName evidence="1">Kup system potassium uptake protein</fullName>
    </alternativeName>
</protein>
<feature type="chain" id="PRO_1000068648" description="Low affinity potassium transport system protein Kup">
    <location>
        <begin position="1"/>
        <end position="623"/>
    </location>
</feature>
<feature type="transmembrane region" description="Helical" evidence="1">
    <location>
        <begin position="9"/>
        <end position="29"/>
    </location>
</feature>
<feature type="transmembrane region" description="Helical" evidence="1">
    <location>
        <begin position="49"/>
        <end position="69"/>
    </location>
</feature>
<feature type="transmembrane region" description="Helical" evidence="1">
    <location>
        <begin position="101"/>
        <end position="121"/>
    </location>
</feature>
<feature type="transmembrane region" description="Helical" evidence="1">
    <location>
        <begin position="137"/>
        <end position="157"/>
    </location>
</feature>
<feature type="transmembrane region" description="Helical" evidence="1">
    <location>
        <begin position="163"/>
        <end position="183"/>
    </location>
</feature>
<feature type="transmembrane region" description="Helical" evidence="1">
    <location>
        <begin position="212"/>
        <end position="232"/>
    </location>
</feature>
<feature type="transmembrane region" description="Helical" evidence="1">
    <location>
        <begin position="247"/>
        <end position="267"/>
    </location>
</feature>
<feature type="transmembrane region" description="Helical" evidence="1">
    <location>
        <begin position="276"/>
        <end position="296"/>
    </location>
</feature>
<feature type="transmembrane region" description="Helical" evidence="1">
    <location>
        <begin position="337"/>
        <end position="357"/>
    </location>
</feature>
<feature type="transmembrane region" description="Helical" evidence="1">
    <location>
        <begin position="363"/>
        <end position="383"/>
    </location>
</feature>
<feature type="transmembrane region" description="Helical" evidence="1">
    <location>
        <begin position="395"/>
        <end position="415"/>
    </location>
</feature>
<feature type="transmembrane region" description="Helical" evidence="1">
    <location>
        <begin position="419"/>
        <end position="439"/>
    </location>
</feature>
<sequence length="623" mass="69020">MSTENKQSLPAITLAAIGVVYGDIGTSPLYTLRECLSGQFGFGVERDAVFGFLSLIFWLLVFVVSFKYLTFVMRADNAGEGGILTLMSLAGRNTSARMTSVLVILGLIGGSFFYGEVVITPAISVMSAIEGLEIAAPSLDPYIVPLSIVVLTLLFMIQKHGTGMVGKLFAPIMLAWFLVLAVLGARSILNNPEVLQALNPVWAVHFFLEYKAVSFAALGAVVLSITGVEALYADMGHFGKLPIRVAWFSVVLPSLVLNYFGQGALLLKTPEAIKNPFFLLAPDWALIPMLILATLATVIASQAVISGVFSLTRQAVRLGYLSPMRIIHTSEMESGQIYIPVVNWLLYFAVVIVIVSFEHSSNLAAAYGIAVTGTMVLTSILFATAARKNWHWSRILVGLMVVAFLCVDVPLFSANLEKLFSGGWLPLSLGLVMFIIMTTWKSERFRLLRRMHEHGNSLDAMITSLEKSPPVRVPGTAVYMSRALNVIPFALLHNLKHNKVLHERVILLTLRTEDAPYVHNVKRVTLEQLSPTFWRVVASYGWRETPNVEEIFHRCGLEGLSCRMMETSFFMSHESLIIGDKRPWYLRLRGKLFLLLQRNALRAPDQFEIPPNRVIELGTQVEI</sequence>
<dbReference type="EMBL" id="CP000783">
    <property type="protein sequence ID" value="ABU79207.1"/>
    <property type="molecule type" value="Genomic_DNA"/>
</dbReference>
<dbReference type="RefSeq" id="WP_007872196.1">
    <property type="nucleotide sequence ID" value="NC_009778.1"/>
</dbReference>
<dbReference type="KEGG" id="esa:ESA_04021"/>
<dbReference type="HOGENOM" id="CLU_008142_4_2_6"/>
<dbReference type="Proteomes" id="UP000000260">
    <property type="component" value="Chromosome"/>
</dbReference>
<dbReference type="GO" id="GO:0005886">
    <property type="term" value="C:plasma membrane"/>
    <property type="evidence" value="ECO:0007669"/>
    <property type="project" value="UniProtKB-SubCell"/>
</dbReference>
<dbReference type="GO" id="GO:0015079">
    <property type="term" value="F:potassium ion transmembrane transporter activity"/>
    <property type="evidence" value="ECO:0007669"/>
    <property type="project" value="UniProtKB-UniRule"/>
</dbReference>
<dbReference type="GO" id="GO:0015293">
    <property type="term" value="F:symporter activity"/>
    <property type="evidence" value="ECO:0007669"/>
    <property type="project" value="UniProtKB-UniRule"/>
</dbReference>
<dbReference type="HAMAP" id="MF_01522">
    <property type="entry name" value="Kup"/>
    <property type="match status" value="1"/>
</dbReference>
<dbReference type="InterPro" id="IPR003855">
    <property type="entry name" value="K+_transporter"/>
</dbReference>
<dbReference type="InterPro" id="IPR053952">
    <property type="entry name" value="K_trans_C"/>
</dbReference>
<dbReference type="InterPro" id="IPR053951">
    <property type="entry name" value="K_trans_N"/>
</dbReference>
<dbReference type="InterPro" id="IPR023051">
    <property type="entry name" value="Kup"/>
</dbReference>
<dbReference type="NCBIfam" id="TIGR00794">
    <property type="entry name" value="kup"/>
    <property type="match status" value="1"/>
</dbReference>
<dbReference type="NCBIfam" id="NF008015">
    <property type="entry name" value="PRK10745.1"/>
    <property type="match status" value="1"/>
</dbReference>
<dbReference type="PANTHER" id="PTHR30540:SF79">
    <property type="entry name" value="LOW AFFINITY POTASSIUM TRANSPORT SYSTEM PROTEIN KUP"/>
    <property type="match status" value="1"/>
</dbReference>
<dbReference type="PANTHER" id="PTHR30540">
    <property type="entry name" value="OSMOTIC STRESS POTASSIUM TRANSPORTER"/>
    <property type="match status" value="1"/>
</dbReference>
<dbReference type="Pfam" id="PF02705">
    <property type="entry name" value="K_trans"/>
    <property type="match status" value="1"/>
</dbReference>
<dbReference type="Pfam" id="PF22776">
    <property type="entry name" value="K_trans_C"/>
    <property type="match status" value="1"/>
</dbReference>
<evidence type="ECO:0000255" key="1">
    <source>
        <dbReference type="HAMAP-Rule" id="MF_01522"/>
    </source>
</evidence>
<comment type="function">
    <text evidence="1">Responsible for the low-affinity transport of potassium into the cell. Likely operates as a K(+):H(+) symporter.</text>
</comment>
<comment type="catalytic activity">
    <reaction evidence="1">
        <text>K(+)(in) + H(+)(in) = K(+)(out) + H(+)(out)</text>
        <dbReference type="Rhea" id="RHEA:28490"/>
        <dbReference type="ChEBI" id="CHEBI:15378"/>
        <dbReference type="ChEBI" id="CHEBI:29103"/>
    </reaction>
    <physiologicalReaction direction="right-to-left" evidence="1">
        <dbReference type="Rhea" id="RHEA:28492"/>
    </physiologicalReaction>
</comment>
<comment type="subcellular location">
    <subcellularLocation>
        <location evidence="1">Cell inner membrane</location>
        <topology evidence="1">Multi-pass membrane protein</topology>
    </subcellularLocation>
</comment>
<comment type="similarity">
    <text evidence="1">Belongs to the HAK/KUP transporter (TC 2.A.72) family.</text>
</comment>
<name>KUP_CROS8</name>
<organism>
    <name type="scientific">Cronobacter sakazakii (strain ATCC BAA-894)</name>
    <name type="common">Enterobacter sakazakii</name>
    <dbReference type="NCBI Taxonomy" id="290339"/>
    <lineage>
        <taxon>Bacteria</taxon>
        <taxon>Pseudomonadati</taxon>
        <taxon>Pseudomonadota</taxon>
        <taxon>Gammaproteobacteria</taxon>
        <taxon>Enterobacterales</taxon>
        <taxon>Enterobacteriaceae</taxon>
        <taxon>Cronobacter</taxon>
    </lineage>
</organism>
<reference key="1">
    <citation type="journal article" date="2010" name="PLoS ONE">
        <title>Genome sequence of Cronobacter sakazakii BAA-894 and comparative genomic hybridization analysis with other Cronobacter species.</title>
        <authorList>
            <person name="Kucerova E."/>
            <person name="Clifton S.W."/>
            <person name="Xia X.Q."/>
            <person name="Long F."/>
            <person name="Porwollik S."/>
            <person name="Fulton L."/>
            <person name="Fronick C."/>
            <person name="Minx P."/>
            <person name="Kyung K."/>
            <person name="Warren W."/>
            <person name="Fulton R."/>
            <person name="Feng D."/>
            <person name="Wollam A."/>
            <person name="Shah N."/>
            <person name="Bhonagiri V."/>
            <person name="Nash W.E."/>
            <person name="Hallsworth-Pepin K."/>
            <person name="Wilson R.K."/>
            <person name="McClelland M."/>
            <person name="Forsythe S.J."/>
        </authorList>
    </citation>
    <scope>NUCLEOTIDE SEQUENCE [LARGE SCALE GENOMIC DNA]</scope>
    <source>
        <strain>ATCC BAA-894</strain>
    </source>
</reference>
<keyword id="KW-0997">Cell inner membrane</keyword>
<keyword id="KW-1003">Cell membrane</keyword>
<keyword id="KW-0406">Ion transport</keyword>
<keyword id="KW-0472">Membrane</keyword>
<keyword id="KW-0630">Potassium</keyword>
<keyword id="KW-0633">Potassium transport</keyword>
<keyword id="KW-1185">Reference proteome</keyword>
<keyword id="KW-0769">Symport</keyword>
<keyword id="KW-0812">Transmembrane</keyword>
<keyword id="KW-1133">Transmembrane helix</keyword>
<keyword id="KW-0813">Transport</keyword>